<sequence>MKIILLFLAALASFTVHAQPPSQTVEQTVRHIYQNYKSDATAPYFGETGERAITSARIQQALTLNDNLTLPGNIGWLDYDPVCDCQDFGDLVLESVAITQTDADHADAVVRFRIFKDDKEKTTQTLKMVAENGRWVIDDIVSNHGSVLQAVNSENEKTLAALASLQKEQPEAFVAELFEHIADYSWPWTWVVSDSYRQAVNAFYKTTFKTANNPDEDMQIERQFIYDNPICFGEESLFSRVDEIRVLEKTADSARIHVRFTLTNGNNEEQELVLQRREGKWEIADFIRPNSGSLLKQIEAKTAARLKQ</sequence>
<accession>Q46858</accession>
<accession>Q2M9I6</accession>
<accession>Q46859</accession>
<accession>Q6BF54</accession>
<feature type="signal peptide" evidence="1">
    <location>
        <begin position="1"/>
        <end position="18"/>
    </location>
</feature>
<feature type="chain" id="PRO_0000013899" description="Uncharacterized protein YqhG">
    <location>
        <begin position="19"/>
        <end position="308"/>
    </location>
</feature>
<feature type="sequence conflict" description="In Ref. 1; AAA69181." evidence="2" ref="1">
    <original>R</original>
    <variation>RH</variation>
    <location>
        <position position="197"/>
    </location>
</feature>
<keyword id="KW-1185">Reference proteome</keyword>
<keyword id="KW-0732">Signal</keyword>
<dbReference type="EMBL" id="U28377">
    <property type="protein sequence ID" value="AAA69180.1"/>
    <property type="status" value="ALT_FRAME"/>
    <property type="molecule type" value="Genomic_DNA"/>
</dbReference>
<dbReference type="EMBL" id="U28377">
    <property type="protein sequence ID" value="AAA69181.1"/>
    <property type="status" value="ALT_FRAME"/>
    <property type="molecule type" value="Genomic_DNA"/>
</dbReference>
<dbReference type="EMBL" id="U00096">
    <property type="protein sequence ID" value="AAT48160.1"/>
    <property type="molecule type" value="Genomic_DNA"/>
</dbReference>
<dbReference type="EMBL" id="AP009048">
    <property type="protein sequence ID" value="BAE77070.1"/>
    <property type="molecule type" value="Genomic_DNA"/>
</dbReference>
<dbReference type="PIR" id="C65088">
    <property type="entry name" value="C65088"/>
</dbReference>
<dbReference type="RefSeq" id="WP_000691619.1">
    <property type="nucleotide sequence ID" value="NZ_LN832404.1"/>
</dbReference>
<dbReference type="RefSeq" id="YP_026195.1">
    <property type="nucleotide sequence ID" value="NC_000913.3"/>
</dbReference>
<dbReference type="BioGRID" id="4259245">
    <property type="interactions" value="161"/>
</dbReference>
<dbReference type="FunCoup" id="Q46858">
    <property type="interactions" value="12"/>
</dbReference>
<dbReference type="STRING" id="511145.b3013"/>
<dbReference type="PaxDb" id="511145-b3013"/>
<dbReference type="EnsemblBacteria" id="AAT48160">
    <property type="protein sequence ID" value="AAT48160"/>
    <property type="gene ID" value="b3013"/>
</dbReference>
<dbReference type="GeneID" id="945919"/>
<dbReference type="KEGG" id="ecj:JW5500"/>
<dbReference type="KEGG" id="eco:b3013"/>
<dbReference type="KEGG" id="ecoc:C3026_16470"/>
<dbReference type="PATRIC" id="fig|511145.12.peg.3108"/>
<dbReference type="EchoBASE" id="EB2836"/>
<dbReference type="eggNOG" id="ENOG5032RGV">
    <property type="taxonomic scope" value="Bacteria"/>
</dbReference>
<dbReference type="HOGENOM" id="CLU_079314_0_0_6"/>
<dbReference type="InParanoid" id="Q46858"/>
<dbReference type="OMA" id="TQPDADH"/>
<dbReference type="OrthoDB" id="7204586at2"/>
<dbReference type="BioCyc" id="EcoCyc:G7566-MONOMER"/>
<dbReference type="PRO" id="PR:Q46858"/>
<dbReference type="Proteomes" id="UP000000625">
    <property type="component" value="Chromosome"/>
</dbReference>
<dbReference type="Gene3D" id="3.10.450.50">
    <property type="match status" value="1"/>
</dbReference>
<dbReference type="InterPro" id="IPR024289">
    <property type="entry name" value="DUF3828"/>
</dbReference>
<dbReference type="Pfam" id="PF12883">
    <property type="entry name" value="DUF3828"/>
    <property type="match status" value="2"/>
</dbReference>
<name>YQHG_ECOLI</name>
<evidence type="ECO:0000255" key="1"/>
<evidence type="ECO:0000305" key="2"/>
<gene>
    <name type="primary">yqhG</name>
    <name type="synonym">yqhF</name>
    <name type="ordered locus">b3013</name>
    <name type="ordered locus">JW5500</name>
</gene>
<protein>
    <recommendedName>
        <fullName>Uncharacterized protein YqhG</fullName>
    </recommendedName>
</protein>
<organism>
    <name type="scientific">Escherichia coli (strain K12)</name>
    <dbReference type="NCBI Taxonomy" id="83333"/>
    <lineage>
        <taxon>Bacteria</taxon>
        <taxon>Pseudomonadati</taxon>
        <taxon>Pseudomonadota</taxon>
        <taxon>Gammaproteobacteria</taxon>
        <taxon>Enterobacterales</taxon>
        <taxon>Enterobacteriaceae</taxon>
        <taxon>Escherichia</taxon>
    </lineage>
</organism>
<proteinExistence type="inferred from homology"/>
<comment type="sequence caution" evidence="2">
    <conflict type="frameshift">
        <sequence resource="EMBL-CDS" id="AAA69180"/>
    </conflict>
</comment>
<comment type="sequence caution" evidence="2">
    <conflict type="frameshift">
        <sequence resource="EMBL-CDS" id="AAA69181"/>
    </conflict>
</comment>
<reference key="1">
    <citation type="journal article" date="1997" name="Science">
        <title>The complete genome sequence of Escherichia coli K-12.</title>
        <authorList>
            <person name="Blattner F.R."/>
            <person name="Plunkett G. III"/>
            <person name="Bloch C.A."/>
            <person name="Perna N.T."/>
            <person name="Burland V."/>
            <person name="Riley M."/>
            <person name="Collado-Vides J."/>
            <person name="Glasner J.D."/>
            <person name="Rode C.K."/>
            <person name="Mayhew G.F."/>
            <person name="Gregor J."/>
            <person name="Davis N.W."/>
            <person name="Kirkpatrick H.A."/>
            <person name="Goeden M.A."/>
            <person name="Rose D.J."/>
            <person name="Mau B."/>
            <person name="Shao Y."/>
        </authorList>
    </citation>
    <scope>NUCLEOTIDE SEQUENCE [LARGE SCALE GENOMIC DNA]</scope>
    <source>
        <strain>K12 / MG1655 / ATCC 47076</strain>
    </source>
</reference>
<reference key="2">
    <citation type="journal article" date="2006" name="Nucleic Acids Res.">
        <title>Escherichia coli K-12: a cooperatively developed annotation snapshot -- 2005.</title>
        <authorList>
            <person name="Riley M."/>
            <person name="Abe T."/>
            <person name="Arnaud M.B."/>
            <person name="Berlyn M.K.B."/>
            <person name="Blattner F.R."/>
            <person name="Chaudhuri R.R."/>
            <person name="Glasner J.D."/>
            <person name="Horiuchi T."/>
            <person name="Keseler I.M."/>
            <person name="Kosuge T."/>
            <person name="Mori H."/>
            <person name="Perna N.T."/>
            <person name="Plunkett G. III"/>
            <person name="Rudd K.E."/>
            <person name="Serres M.H."/>
            <person name="Thomas G.H."/>
            <person name="Thomson N.R."/>
            <person name="Wishart D."/>
            <person name="Wanner B.L."/>
        </authorList>
    </citation>
    <scope>SEQUENCE REVISION TO 197</scope>
</reference>
<reference key="3">
    <citation type="journal article" date="2006" name="Mol. Syst. Biol.">
        <title>Highly accurate genome sequences of Escherichia coli K-12 strains MG1655 and W3110.</title>
        <authorList>
            <person name="Hayashi K."/>
            <person name="Morooka N."/>
            <person name="Yamamoto Y."/>
            <person name="Fujita K."/>
            <person name="Isono K."/>
            <person name="Choi S."/>
            <person name="Ohtsubo E."/>
            <person name="Baba T."/>
            <person name="Wanner B.L."/>
            <person name="Mori H."/>
            <person name="Horiuchi T."/>
        </authorList>
    </citation>
    <scope>NUCLEOTIDE SEQUENCE [LARGE SCALE GENOMIC DNA]</scope>
    <source>
        <strain>K12 / W3110 / ATCC 27325 / DSM 5911</strain>
    </source>
</reference>